<proteinExistence type="inferred from homology"/>
<reference key="1">
    <citation type="journal article" date="1996" name="J. Bacteriol.">
        <title>Identification of two genes with prepilin-like leader sequences involved in type 4 fimbrial biogenesis in Pseudomonas aeruginosa.</title>
        <authorList>
            <person name="Alm R.A."/>
            <person name="Mattick J.S."/>
        </authorList>
    </citation>
    <scope>NUCLEOTIDE SEQUENCE [GENOMIC DNA]</scope>
    <source>
        <strain>ATCC 15692 / DSM 22644 / CIP 104116 / JCM 14847 / LMG 12228 / 1C / PRS 101 / PAO1</strain>
    </source>
</reference>
<reference key="2">
    <citation type="journal article" date="2000" name="Nature">
        <title>Complete genome sequence of Pseudomonas aeruginosa PAO1, an opportunistic pathogen.</title>
        <authorList>
            <person name="Stover C.K."/>
            <person name="Pham X.-Q.T."/>
            <person name="Erwin A.L."/>
            <person name="Mizoguchi S.D."/>
            <person name="Warrener P."/>
            <person name="Hickey M.J."/>
            <person name="Brinkman F.S.L."/>
            <person name="Hufnagle W.O."/>
            <person name="Kowalik D.J."/>
            <person name="Lagrou M."/>
            <person name="Garber R.L."/>
            <person name="Goltry L."/>
            <person name="Tolentino E."/>
            <person name="Westbrock-Wadman S."/>
            <person name="Yuan Y."/>
            <person name="Brody L.L."/>
            <person name="Coulter S.N."/>
            <person name="Folger K.R."/>
            <person name="Kas A."/>
            <person name="Larbig K."/>
            <person name="Lim R.M."/>
            <person name="Smith K.A."/>
            <person name="Spencer D.H."/>
            <person name="Wong G.K.-S."/>
            <person name="Wu Z."/>
            <person name="Paulsen I.T."/>
            <person name="Reizer J."/>
            <person name="Saier M.H. Jr."/>
            <person name="Hancock R.E.W."/>
            <person name="Lory S."/>
            <person name="Olson M.V."/>
        </authorList>
    </citation>
    <scope>NUCLEOTIDE SEQUENCE [LARGE SCALE GENOMIC DNA]</scope>
    <source>
        <strain>ATCC 15692 / DSM 22644 / CIP 104116 / JCM 14847 / LMG 12228 / 1C / PRS 101 / PAO1</strain>
    </source>
</reference>
<reference key="3">
    <citation type="journal article" date="1993" name="Mol. Microbiol.">
        <title>PilS and PilR, a two-component transcriptional regulatory system controlling expression of type 4 fimbriae in Pseudomonas aeruginosa.</title>
        <authorList>
            <person name="Hobbs M."/>
            <person name="Collie E.S.R."/>
            <person name="Free P.D."/>
            <person name="Livingston S.P."/>
            <person name="Mattick J.S."/>
        </authorList>
    </citation>
    <scope>NUCLEOTIDE SEQUENCE [GENOMIC DNA] OF 193-364</scope>
    <source>
        <strain>ATCC 15692 / DSM 22644 / CIP 104116 / JCM 14847 / LMG 12228 / 1C / PRS 101 / PAO1</strain>
    </source>
</reference>
<gene>
    <name evidence="2" type="primary">thiO</name>
    <name type="ordered locus">PA4548</name>
</gene>
<keyword id="KW-0274">FAD</keyword>
<keyword id="KW-0285">Flavoprotein</keyword>
<keyword id="KW-0560">Oxidoreductase</keyword>
<keyword id="KW-1185">Reference proteome</keyword>
<keyword id="KW-0784">Thiamine biosynthesis</keyword>
<name>GLYOX_PSEAE</name>
<organism>
    <name type="scientific">Pseudomonas aeruginosa (strain ATCC 15692 / DSM 22644 / CIP 104116 / JCM 14847 / LMG 12228 / 1C / PRS 101 / PAO1)</name>
    <dbReference type="NCBI Taxonomy" id="208964"/>
    <lineage>
        <taxon>Bacteria</taxon>
        <taxon>Pseudomonadati</taxon>
        <taxon>Pseudomonadota</taxon>
        <taxon>Gammaproteobacteria</taxon>
        <taxon>Pseudomonadales</taxon>
        <taxon>Pseudomonadaceae</taxon>
        <taxon>Pseudomonas</taxon>
    </lineage>
</organism>
<feature type="chain" id="PRO_0000166164" description="Glycine oxidase">
    <location>
        <begin position="1"/>
        <end position="364"/>
    </location>
</feature>
<feature type="binding site" evidence="1">
    <location>
        <begin position="12"/>
        <end position="13"/>
    </location>
    <ligand>
        <name>FAD</name>
        <dbReference type="ChEBI" id="CHEBI:57692"/>
    </ligand>
</feature>
<feature type="binding site" evidence="1">
    <location>
        <begin position="32"/>
        <end position="33"/>
    </location>
    <ligand>
        <name>FAD</name>
        <dbReference type="ChEBI" id="CHEBI:57692"/>
    </ligand>
</feature>
<feature type="binding site" evidence="1">
    <location>
        <begin position="40"/>
        <end position="41"/>
    </location>
    <ligand>
        <name>FAD</name>
        <dbReference type="ChEBI" id="CHEBI:57692"/>
    </ligand>
</feature>
<feature type="binding site" evidence="1">
    <location>
        <begin position="45"/>
        <end position="47"/>
    </location>
    <ligand>
        <name>FAD</name>
        <dbReference type="ChEBI" id="CHEBI:57692"/>
    </ligand>
</feature>
<feature type="binding site" evidence="1">
    <location>
        <position position="173"/>
    </location>
    <ligand>
        <name>FAD</name>
        <dbReference type="ChEBI" id="CHEBI:57692"/>
    </ligand>
</feature>
<feature type="binding site" evidence="1">
    <location>
        <position position="302"/>
    </location>
    <ligand>
        <name>substrate</name>
    </ligand>
</feature>
<feature type="binding site" evidence="1">
    <location>
        <begin position="327"/>
        <end position="333"/>
    </location>
    <ligand>
        <name>FAD</name>
        <dbReference type="ChEBI" id="CHEBI:57692"/>
    </ligand>
</feature>
<feature type="sequence conflict" description="In Ref. 1; AAB39269." evidence="3" ref="1">
    <original>E</original>
    <variation>K</variation>
    <location>
        <position position="20"/>
    </location>
</feature>
<feature type="sequence conflict" description="In Ref. 1; AAB39269." evidence="3" ref="1">
    <original>L</original>
    <variation>I</variation>
    <location>
        <position position="23"/>
    </location>
</feature>
<feature type="sequence conflict" description="In Ref. 1; AAB39269." evidence="3" ref="1">
    <original>S</original>
    <variation>N</variation>
    <location>
        <position position="57"/>
    </location>
</feature>
<feature type="sequence conflict" description="In Ref. 1; AAB39269." evidence="3" ref="1">
    <original>R</original>
    <variation>P</variation>
    <location>
        <position position="109"/>
    </location>
</feature>
<feature type="sequence conflict" description="In Ref. 1; AAB39269." evidence="3" ref="1">
    <original>ASA</original>
    <variation>VSV</variation>
    <location>
        <begin position="280"/>
        <end position="282"/>
    </location>
</feature>
<comment type="function">
    <text evidence="2">Catalyzes the oxidation of glycine, leading to glyoxyl imine and hydrogen peroxide as primary products; glyoxyl imine is used for the biosynthesis of the thiazole ring of thiamine. Otherwise, glyoxyl imine is spontaneously hydrolyzed in water to produce glyoxylate and ammonia. Can also use sarcosine (N-methylglycine) as substrate.</text>
</comment>
<comment type="catalytic activity">
    <reaction evidence="2">
        <text>glycine + O2 + H2O = glyoxylate + H2O2 + NH4(+)</text>
        <dbReference type="Rhea" id="RHEA:11532"/>
        <dbReference type="ChEBI" id="CHEBI:15377"/>
        <dbReference type="ChEBI" id="CHEBI:15379"/>
        <dbReference type="ChEBI" id="CHEBI:16240"/>
        <dbReference type="ChEBI" id="CHEBI:28938"/>
        <dbReference type="ChEBI" id="CHEBI:36655"/>
        <dbReference type="ChEBI" id="CHEBI:57305"/>
        <dbReference type="EC" id="1.4.3.19"/>
    </reaction>
</comment>
<comment type="catalytic activity">
    <reaction evidence="2">
        <text>sarcosine + O2 + H2O = methylamine + glyoxylate + H2O2</text>
        <dbReference type="Rhea" id="RHEA:15165"/>
        <dbReference type="ChEBI" id="CHEBI:15377"/>
        <dbReference type="ChEBI" id="CHEBI:15379"/>
        <dbReference type="ChEBI" id="CHEBI:16240"/>
        <dbReference type="ChEBI" id="CHEBI:36655"/>
        <dbReference type="ChEBI" id="CHEBI:57433"/>
        <dbReference type="ChEBI" id="CHEBI:59338"/>
        <dbReference type="EC" id="1.4.3.19"/>
    </reaction>
</comment>
<comment type="cofactor">
    <cofactor evidence="2">
        <name>FAD</name>
        <dbReference type="ChEBI" id="CHEBI:57692"/>
    </cofactor>
</comment>
<comment type="pathway">
    <text evidence="2">Cofactor biosynthesis; thiamine diphosphate biosynthesis.</text>
</comment>
<comment type="subunit">
    <text evidence="2">Monomer.</text>
</comment>
<comment type="similarity">
    <text evidence="3">Belongs to the DAO family. ThiO subfamily.</text>
</comment>
<comment type="sequence caution" evidence="3">
    <conflict type="frameshift">
        <sequence resource="EMBL-CDS" id="CAA78142"/>
    </conflict>
</comment>
<evidence type="ECO:0000250" key="1">
    <source>
        <dbReference type="UniProtKB" id="O31616"/>
    </source>
</evidence>
<evidence type="ECO:0000250" key="2">
    <source>
        <dbReference type="UniProtKB" id="Q88Q83"/>
    </source>
</evidence>
<evidence type="ECO:0000305" key="3"/>
<sequence length="364" mass="39445">MSERVVVVGAGVIGLLTARELALAGLRVTLVERGESGREASWAGGGIVSPLYPWRYSPAVTALAHWSQDFYPALGQRLLDETGLDPEVHTVGLYWLDLDDQTEALQWARKHTRPLKEVPIEEAYAAVPGLGAGFQRAVYMSGVANVRNPRLARSLRASLQQFANLELHEQTEVRGWLRDGDRVVGVATSRGEIRGDKVLLAAGAWSGELLKPLGLELPVVPVKGQMILYKCAADFLPRMVLAKGRYAIPRRDGHILIGSTLEHSGFDKTPTDEAQESLRASAAELLPELADMQPVAHWAGLRPGSPEGIPYIGPVPGFDGLWLNTGHYRNGLVLAPASCRLLADLMSGREPIIDPAPYAPAGRL</sequence>
<dbReference type="EC" id="1.4.3.19" evidence="2"/>
<dbReference type="EMBL" id="L48934">
    <property type="protein sequence ID" value="AAB39269.1"/>
    <property type="molecule type" value="Genomic_DNA"/>
</dbReference>
<dbReference type="EMBL" id="AE004091">
    <property type="protein sequence ID" value="AAG07936.1"/>
    <property type="molecule type" value="Genomic_DNA"/>
</dbReference>
<dbReference type="EMBL" id="Z12154">
    <property type="protein sequence ID" value="CAA78142.1"/>
    <property type="status" value="ALT_FRAME"/>
    <property type="molecule type" value="Genomic_DNA"/>
</dbReference>
<dbReference type="PIR" id="B83078">
    <property type="entry name" value="B83078"/>
</dbReference>
<dbReference type="RefSeq" id="NP_253238.1">
    <property type="nucleotide sequence ID" value="NC_002516.2"/>
</dbReference>
<dbReference type="RefSeq" id="WP_010895678.1">
    <property type="nucleotide sequence ID" value="NZ_QZGE01000004.1"/>
</dbReference>
<dbReference type="SMR" id="P33642"/>
<dbReference type="STRING" id="208964.PA4548"/>
<dbReference type="PaxDb" id="208964-PA4548"/>
<dbReference type="DNASU" id="878196"/>
<dbReference type="GeneID" id="878196"/>
<dbReference type="KEGG" id="pae:PA4548"/>
<dbReference type="PATRIC" id="fig|208964.12.peg.4760"/>
<dbReference type="PseudoCAP" id="PA4548"/>
<dbReference type="HOGENOM" id="CLU_007884_4_5_6"/>
<dbReference type="InParanoid" id="P33642"/>
<dbReference type="OrthoDB" id="18526at2"/>
<dbReference type="PhylomeDB" id="P33642"/>
<dbReference type="BioCyc" id="PAER208964:G1FZ6-4641-MONOMER"/>
<dbReference type="UniPathway" id="UPA00060"/>
<dbReference type="Proteomes" id="UP000002438">
    <property type="component" value="Chromosome"/>
</dbReference>
<dbReference type="GO" id="GO:0005737">
    <property type="term" value="C:cytoplasm"/>
    <property type="evidence" value="ECO:0000318"/>
    <property type="project" value="GO_Central"/>
</dbReference>
<dbReference type="GO" id="GO:0050660">
    <property type="term" value="F:flavin adenine dinucleotide binding"/>
    <property type="evidence" value="ECO:0007669"/>
    <property type="project" value="InterPro"/>
</dbReference>
<dbReference type="GO" id="GO:0043799">
    <property type="term" value="F:glycine oxidase activity"/>
    <property type="evidence" value="ECO:0007669"/>
    <property type="project" value="UniProtKB-EC"/>
</dbReference>
<dbReference type="GO" id="GO:0009228">
    <property type="term" value="P:thiamine biosynthetic process"/>
    <property type="evidence" value="ECO:0007669"/>
    <property type="project" value="UniProtKB-KW"/>
</dbReference>
<dbReference type="GO" id="GO:0009229">
    <property type="term" value="P:thiamine diphosphate biosynthetic process"/>
    <property type="evidence" value="ECO:0007669"/>
    <property type="project" value="UniProtKB-UniPathway"/>
</dbReference>
<dbReference type="Gene3D" id="3.30.9.10">
    <property type="entry name" value="D-Amino Acid Oxidase, subunit A, domain 2"/>
    <property type="match status" value="1"/>
</dbReference>
<dbReference type="Gene3D" id="3.50.50.60">
    <property type="entry name" value="FAD/NAD(P)-binding domain"/>
    <property type="match status" value="1"/>
</dbReference>
<dbReference type="InterPro" id="IPR006076">
    <property type="entry name" value="FAD-dep_OxRdtase"/>
</dbReference>
<dbReference type="InterPro" id="IPR036188">
    <property type="entry name" value="FAD/NAD-bd_sf"/>
</dbReference>
<dbReference type="InterPro" id="IPR012727">
    <property type="entry name" value="Gly_oxidase_ThiO"/>
</dbReference>
<dbReference type="NCBIfam" id="TIGR02352">
    <property type="entry name" value="thiamin_ThiO"/>
    <property type="match status" value="1"/>
</dbReference>
<dbReference type="PANTHER" id="PTHR13847:SF289">
    <property type="entry name" value="GLYCINE OXIDASE"/>
    <property type="match status" value="1"/>
</dbReference>
<dbReference type="PANTHER" id="PTHR13847">
    <property type="entry name" value="SARCOSINE DEHYDROGENASE-RELATED"/>
    <property type="match status" value="1"/>
</dbReference>
<dbReference type="Pfam" id="PF01266">
    <property type="entry name" value="DAO"/>
    <property type="match status" value="1"/>
</dbReference>
<dbReference type="SUPFAM" id="SSF54373">
    <property type="entry name" value="FAD-linked reductases, C-terminal domain"/>
    <property type="match status" value="1"/>
</dbReference>
<dbReference type="SUPFAM" id="SSF51905">
    <property type="entry name" value="FAD/NAD(P)-binding domain"/>
    <property type="match status" value="1"/>
</dbReference>
<accession>P33642</accession>
<accession>Q51527</accession>
<accession>Q9HVN1</accession>
<protein>
    <recommendedName>
        <fullName evidence="2">Glycine oxidase</fullName>
        <shortName evidence="2">GO</shortName>
        <ecNumber evidence="2">1.4.3.19</ecNumber>
    </recommendedName>
</protein>